<keyword id="KW-0349">Heme</keyword>
<keyword id="KW-0408">Iron</keyword>
<keyword id="KW-0472">Membrane</keyword>
<keyword id="KW-0479">Metal-binding</keyword>
<keyword id="KW-0503">Monooxygenase</keyword>
<keyword id="KW-0560">Oxidoreductase</keyword>
<keyword id="KW-0812">Transmembrane</keyword>
<keyword id="KW-1133">Transmembrane helix</keyword>
<dbReference type="EC" id="1.-.-.-" evidence="6"/>
<dbReference type="EMBL" id="PP505398">
    <property type="protein sequence ID" value="WYC13328.1"/>
    <property type="molecule type" value="Genomic_DNA"/>
</dbReference>
<dbReference type="SMR" id="P9WEJ0"/>
<dbReference type="UniPathway" id="UPA00213"/>
<dbReference type="GO" id="GO:0016020">
    <property type="term" value="C:membrane"/>
    <property type="evidence" value="ECO:0007669"/>
    <property type="project" value="UniProtKB-SubCell"/>
</dbReference>
<dbReference type="GO" id="GO:0020037">
    <property type="term" value="F:heme binding"/>
    <property type="evidence" value="ECO:0007669"/>
    <property type="project" value="InterPro"/>
</dbReference>
<dbReference type="GO" id="GO:0005506">
    <property type="term" value="F:iron ion binding"/>
    <property type="evidence" value="ECO:0007669"/>
    <property type="project" value="InterPro"/>
</dbReference>
<dbReference type="GO" id="GO:0004497">
    <property type="term" value="F:monooxygenase activity"/>
    <property type="evidence" value="ECO:0007669"/>
    <property type="project" value="UniProtKB-KW"/>
</dbReference>
<dbReference type="GO" id="GO:0016705">
    <property type="term" value="F:oxidoreductase activity, acting on paired donors, with incorporation or reduction of molecular oxygen"/>
    <property type="evidence" value="ECO:0007669"/>
    <property type="project" value="InterPro"/>
</dbReference>
<dbReference type="CDD" id="cd11069">
    <property type="entry name" value="CYP_FUM15-like"/>
    <property type="match status" value="1"/>
</dbReference>
<dbReference type="Gene3D" id="1.10.630.10">
    <property type="entry name" value="Cytochrome P450"/>
    <property type="match status" value="1"/>
</dbReference>
<dbReference type="InterPro" id="IPR001128">
    <property type="entry name" value="Cyt_P450"/>
</dbReference>
<dbReference type="InterPro" id="IPR002403">
    <property type="entry name" value="Cyt_P450_E_grp-IV"/>
</dbReference>
<dbReference type="InterPro" id="IPR036396">
    <property type="entry name" value="Cyt_P450_sf"/>
</dbReference>
<dbReference type="InterPro" id="IPR050121">
    <property type="entry name" value="Cytochrome_P450_monoxygenase"/>
</dbReference>
<dbReference type="PANTHER" id="PTHR24305">
    <property type="entry name" value="CYTOCHROME P450"/>
    <property type="match status" value="1"/>
</dbReference>
<dbReference type="PANTHER" id="PTHR24305:SF166">
    <property type="entry name" value="CYTOCHROME P450 12A4, MITOCHONDRIAL-RELATED"/>
    <property type="match status" value="1"/>
</dbReference>
<dbReference type="Pfam" id="PF00067">
    <property type="entry name" value="p450"/>
    <property type="match status" value="1"/>
</dbReference>
<dbReference type="PRINTS" id="PR00465">
    <property type="entry name" value="EP450IV"/>
</dbReference>
<dbReference type="PRINTS" id="PR00385">
    <property type="entry name" value="P450"/>
</dbReference>
<dbReference type="SUPFAM" id="SSF48264">
    <property type="entry name" value="Cytochrome P450"/>
    <property type="match status" value="1"/>
</dbReference>
<reference key="1">
    <citation type="journal article" date="2024" name="J. Am. Chem. Soc.">
        <title>Two cytochrome P450 enzymes form the tricyclic nested skeleton of meroterpenoids by sequential oxidative reactions.</title>
        <authorList>
            <person name="Yang E."/>
            <person name="Yao Y."/>
            <person name="Su H."/>
            <person name="Sun Z."/>
            <person name="Gao S.S."/>
            <person name="Sureram S."/>
            <person name="Kittakoop P."/>
            <person name="Fan K."/>
            <person name="Pan Y."/>
            <person name="Xu X."/>
            <person name="Sun Z.H."/>
            <person name="Ma G."/>
            <person name="Liu G."/>
        </authorList>
    </citation>
    <scope>NUCLEOTIDE SEQUENCE [GENOMIC DNA]</scope>
    <scope>FUNCTION</scope>
    <scope>PATHWAY</scope>
</reference>
<evidence type="ECO:0000250" key="1">
    <source>
        <dbReference type="UniProtKB" id="P04798"/>
    </source>
</evidence>
<evidence type="ECO:0000255" key="2"/>
<evidence type="ECO:0000269" key="3">
    <source>
    </source>
</evidence>
<evidence type="ECO:0000303" key="4">
    <source>
    </source>
</evidence>
<evidence type="ECO:0000305" key="5"/>
<evidence type="ECO:0000305" key="6">
    <source>
    </source>
</evidence>
<protein>
    <recommendedName>
        <fullName evidence="4">Cytochrome P450 monooxygenase claO</fullName>
        <ecNumber evidence="6">1.-.-.-</ecNumber>
    </recommendedName>
    <alternativeName>
        <fullName evidence="4">Clavilactone A biosynthesis cluster protein O</fullName>
    </alternativeName>
</protein>
<gene>
    <name evidence="4" type="primary">claO</name>
</gene>
<comment type="function">
    <text evidence="3">Cytochrome P450 monooxygenase; part of the gene cluster that mediates the biosynthesis of clavilactone A, a meroterpenoid that features a unique benzo-fused ten-membered carbocyclic ring unit with an alpha,beta-epoxy-gamma-lactone moiety, forming an intriguing 10/5/3 tricyclic nested skeleton (PubMed:38602511). Cytochrome P450 monooxygenases claO, claP, claQ, claU, and claW are close orthologs, suggesting that a redundant function or pseudogenes are present in the cla cluster. These monoxygenases are not involved in clavilactone A biosynthesis nor in its modification (PubMed:38602511). ClaR, ClaS and ClaT are sufficient to produce clavilactone A. The biosynthesis begins with the prenyltransferase claS that transfers geranyl pyrophosphate (GPP) to hydroquinone to produces geranylhydroquinone. The cytochrome P450 monooxygenase claR then catalyzes the diradical coupling reaction between the intramolecular hydroquinone and allyl moieties to form the benzo-fused ten-membered carbocyclic ring unit of wigantol. Finally the cytochrome P450 monooxygenase claT exquisitely and stereoselectively assembles the alpha,beta-epoxy-gamma-lactone moiety, producing clavilactone A via arnebinol A (PubMed:38602511).</text>
</comment>
<comment type="cofactor">
    <cofactor evidence="1">
        <name>heme</name>
        <dbReference type="ChEBI" id="CHEBI:30413"/>
    </cofactor>
</comment>
<comment type="pathway">
    <text evidence="6">Secondary metabolite biosynthesis; terpenoid biosynthesis.</text>
</comment>
<comment type="subcellular location">
    <subcellularLocation>
        <location evidence="2">Membrane</location>
        <topology evidence="2">Multi-pass membrane protein</topology>
    </subcellularLocation>
</comment>
<comment type="similarity">
    <text evidence="5">Belongs to the cytochrome P450 family.</text>
</comment>
<sequence>MTPAREIGAFNILVFLIFLWLLSKLVGRLGRRGRTTPLRGPANKSLLFGLTRYINVEADDSGAVYESWAAEYGPAFRVPGVLGSHRIVICDAKAIAHFYSKETFGYVQSPRARSTIKNIVGRGLLWSEGESHRRQRKALSPAFSNAAIRRLTSVFFDSSYKMKAAWDSILETNPDNTVIDVQKWMNHISLDSIGIAGFSHDFGSLDGKHSDVAAVFDSFGSINPSYFSMVIFLLALVFPILLKLPTNRNLLVLKLRERTSEIADVLLERTRKEKEGRTGTVEEKSIIGLLIKAESAETELHMSQEEIVAQMNVLLLAGYETTSSKTFLTWALIELSKNPEKQAKLREELLSQYTTTDPTWEQLANGLPYLDSVVHEILRLHPPVGETFRVAAEDDIIPLSRPLVTLSGQTVSSIAIGKGTMVGVPIRCMNRSEVLWGKDAKEFRPERWLEPGFGENNEVQGHRHLLTFIDGPRTCLGRGFALAEFKAVLSVLIRKYAFEFPGPGGAVPKIEKHRSILPRPKVEGQDGAKVPLRVRRVE</sequence>
<name>CLAO_AMPCV</name>
<feature type="chain" id="PRO_0000461435" description="Cytochrome P450 monooxygenase claO">
    <location>
        <begin position="1"/>
        <end position="538"/>
    </location>
</feature>
<feature type="transmembrane region" description="Helical" evidence="2">
    <location>
        <begin position="7"/>
        <end position="27"/>
    </location>
</feature>
<feature type="transmembrane region" description="Helical" evidence="2">
    <location>
        <begin position="222"/>
        <end position="242"/>
    </location>
</feature>
<feature type="binding site" description="axial binding residue" evidence="1">
    <location>
        <position position="475"/>
    </location>
    <ligand>
        <name>heme</name>
        <dbReference type="ChEBI" id="CHEBI:30413"/>
    </ligand>
    <ligandPart>
        <name>Fe</name>
        <dbReference type="ChEBI" id="CHEBI:18248"/>
    </ligandPart>
</feature>
<proteinExistence type="inferred from homology"/>
<accession>P9WEJ0</accession>
<organism>
    <name type="scientific">Ampulloclitocybe clavipes</name>
    <name type="common">Club foot</name>
    <name type="synonym">Clitocybe clavipes</name>
    <dbReference type="NCBI Taxonomy" id="56467"/>
    <lineage>
        <taxon>Eukaryota</taxon>
        <taxon>Fungi</taxon>
        <taxon>Dikarya</taxon>
        <taxon>Basidiomycota</taxon>
        <taxon>Agaricomycotina</taxon>
        <taxon>Agaricomycetes</taxon>
        <taxon>Agaricomycetidae</taxon>
        <taxon>Agaricales</taxon>
        <taxon>Hygrophoraceae</taxon>
        <taxon>Ampulloclitocybe</taxon>
    </lineage>
</organism>